<gene>
    <name type="primary">phlA</name>
</gene>
<feature type="signal peptide" evidence="1">
    <location>
        <begin position="1"/>
        <end position="24"/>
    </location>
</feature>
<feature type="chain" id="PRO_0000021990" description="Extracellular phospholipase A1">
    <location>
        <begin position="25"/>
        <end position="319"/>
    </location>
</feature>
<feature type="mutagenesis site" description="Loss of ability to bind PhlB." evidence="2">
    <original>G</original>
    <variation>D</variation>
    <location>
        <position position="228"/>
    </location>
</feature>
<reference key="1">
    <citation type="journal article" date="1988" name="J. Bacteriol.">
        <title>Cloning and expression in Escherichia coli of the gene for extracellular phospholipase A1 from Serratia liquefaciens.</title>
        <authorList>
            <person name="Givskov M."/>
            <person name="Olsen L."/>
            <person name="Molin S."/>
        </authorList>
    </citation>
    <scope>NUCLEOTIDE SEQUENCE [GENOMIC DNA]</scope>
</reference>
<reference key="2">
    <citation type="journal article" date="1993" name="Mol. Microbiol.">
        <title>Secretion of Serratia liquefaciens phospholipase from Escherichia coli.</title>
        <authorList>
            <person name="Givskov M."/>
            <person name="Molin S."/>
        </authorList>
    </citation>
    <scope>SEQUENCE REVISION TO 200-245</scope>
    <scope>MUTAGENESIS OF GLY-228</scope>
</reference>
<reference key="3">
    <citation type="journal article" date="1992" name="Mol. Microbiol.">
        <title>Expression of extracellular phospholipase from Serratia liquefaciens is growth-phase-dependent, catabolite-repressed and regulated by anaerobiosis.</title>
        <authorList>
            <person name="Givskov M."/>
            <person name="Molin S."/>
        </authorList>
    </citation>
    <scope>NUCLEOTIDE SEQUENCE [GENOMIC DNA] OF 1-119</scope>
</reference>
<sequence length="319" mass="32848">MSMPLSFTSAVSPVAAIPTPRAAAETRTAASLRHAGKSGPVASPSQNTLNAQNLLNTLVGDISAAAPTAAAAPGVTRGQQSQEGDYALALLAKDVYSLNGQGAAGFNRLSDSALLGFGIDPASLHDAGSGFQAGIYSNDKQYVLAFAGTNDWRDWLSNVRQATGYDDVQYNQAVAAAKSAKAAFGDALVIAGHSLGGGLAATAALATGTVAVTFNAAGVSDYTLNRLGIDPAAAKKDAEAGGIRRYSEQYDMLTSTQESTSLIPDAIGHNITLANNDTLTGIDDWRPSKHLDRSLTAHGIDKVISSMAEQKPWEAKANA</sequence>
<accession>P18952</accession>
<accession>Q6LBK6</accession>
<dbReference type="EC" id="3.1.1.32"/>
<dbReference type="EMBL" id="M23640">
    <property type="protein sequence ID" value="AAA26552.1"/>
    <property type="status" value="ALT_SEQ"/>
    <property type="molecule type" value="mRNA"/>
</dbReference>
<dbReference type="EMBL" id="X66505">
    <property type="protein sequence ID" value="CAA47137.1"/>
    <property type="molecule type" value="Genomic_DNA"/>
</dbReference>
<dbReference type="PIR" id="S32923">
    <property type="entry name" value="S32923"/>
</dbReference>
<dbReference type="SMR" id="P18952"/>
<dbReference type="STRING" id="614.XJ20_04315"/>
<dbReference type="ESTHER" id="serli-pa1">
    <property type="family name" value="Mbeg1-like"/>
</dbReference>
<dbReference type="GO" id="GO:0008970">
    <property type="term" value="F:phospholipase A1 activity"/>
    <property type="evidence" value="ECO:0007669"/>
    <property type="project" value="UniProtKB-EC"/>
</dbReference>
<dbReference type="GO" id="GO:0016042">
    <property type="term" value="P:lipid catabolic process"/>
    <property type="evidence" value="ECO:0007669"/>
    <property type="project" value="UniProtKB-KW"/>
</dbReference>
<dbReference type="Gene3D" id="3.40.50.1820">
    <property type="entry name" value="alpha/beta hydrolase"/>
    <property type="match status" value="1"/>
</dbReference>
<dbReference type="InterPro" id="IPR029058">
    <property type="entry name" value="AB_hydrolase_fold"/>
</dbReference>
<dbReference type="SUPFAM" id="SSF53474">
    <property type="entry name" value="alpha/beta-Hydrolases"/>
    <property type="match status" value="1"/>
</dbReference>
<protein>
    <recommendedName>
        <fullName>Extracellular phospholipase A1</fullName>
        <ecNumber>3.1.1.32</ecNumber>
    </recommendedName>
</protein>
<proteinExistence type="evidence at protein level"/>
<keyword id="KW-0378">Hydrolase</keyword>
<keyword id="KW-0442">Lipid degradation</keyword>
<keyword id="KW-0443">Lipid metabolism</keyword>
<keyword id="KW-0732">Signal</keyword>
<name>PA1_SERLI</name>
<comment type="catalytic activity">
    <reaction>
        <text>a 1,2-diacyl-sn-glycero-3-phosphocholine + H2O = a 2-acyl-sn-glycero-3-phosphocholine + a fatty acid + H(+)</text>
        <dbReference type="Rhea" id="RHEA:18689"/>
        <dbReference type="ChEBI" id="CHEBI:15377"/>
        <dbReference type="ChEBI" id="CHEBI:15378"/>
        <dbReference type="ChEBI" id="CHEBI:28868"/>
        <dbReference type="ChEBI" id="CHEBI:57643"/>
        <dbReference type="ChEBI" id="CHEBI:57875"/>
        <dbReference type="EC" id="3.1.1.32"/>
    </reaction>
</comment>
<comment type="developmental stage">
    <text>Growth phase regulated (late expression).</text>
</comment>
<evidence type="ECO:0000255" key="1"/>
<evidence type="ECO:0000269" key="2">
    <source>
    </source>
</evidence>
<organism>
    <name type="scientific">Serratia liquefaciens</name>
    <dbReference type="NCBI Taxonomy" id="614"/>
    <lineage>
        <taxon>Bacteria</taxon>
        <taxon>Pseudomonadati</taxon>
        <taxon>Pseudomonadota</taxon>
        <taxon>Gammaproteobacteria</taxon>
        <taxon>Enterobacterales</taxon>
        <taxon>Yersiniaceae</taxon>
        <taxon>Serratia</taxon>
    </lineage>
</organism>